<dbReference type="EMBL" id="CY005820">
    <property type="status" value="NOT_ANNOTATED_CDS"/>
    <property type="molecule type" value="Genomic_RNA"/>
</dbReference>
<dbReference type="SMR" id="P0CK80"/>
<dbReference type="Proteomes" id="UP000008434">
    <property type="component" value="Genome"/>
</dbReference>
<dbReference type="Proteomes" id="UP000108613">
    <property type="component" value="Genome"/>
</dbReference>
<dbReference type="GO" id="GO:0003723">
    <property type="term" value="F:RNA binding"/>
    <property type="evidence" value="ECO:0007669"/>
    <property type="project" value="InterPro"/>
</dbReference>
<dbReference type="GO" id="GO:0039694">
    <property type="term" value="P:viral RNA genome replication"/>
    <property type="evidence" value="ECO:0007669"/>
    <property type="project" value="InterPro"/>
</dbReference>
<dbReference type="GO" id="GO:0075523">
    <property type="term" value="P:viral translational frameshifting"/>
    <property type="evidence" value="ECO:0007669"/>
    <property type="project" value="UniProtKB-KW"/>
</dbReference>
<dbReference type="FunFam" id="3.40.91.90:FF:000001">
    <property type="entry name" value="Polymerase acidic protein"/>
    <property type="match status" value="1"/>
</dbReference>
<dbReference type="Gene3D" id="3.40.91.90">
    <property type="entry name" value="Influenza RNA-dependent RNA polymerase subunit PA, endonuclease domain"/>
    <property type="match status" value="1"/>
</dbReference>
<dbReference type="InterPro" id="IPR001009">
    <property type="entry name" value="PA/PA-X"/>
</dbReference>
<dbReference type="InterPro" id="IPR038372">
    <property type="entry name" value="PA/PA-X_sf"/>
</dbReference>
<dbReference type="Pfam" id="PF00603">
    <property type="entry name" value="Flu_PA"/>
    <property type="match status" value="1"/>
</dbReference>
<evidence type="ECO:0000250" key="1">
    <source>
        <dbReference type="UniProtKB" id="P0CK64"/>
    </source>
</evidence>
<evidence type="ECO:0000250" key="2">
    <source>
        <dbReference type="UniProtKB" id="P0CK68"/>
    </source>
</evidence>
<evidence type="ECO:0000250" key="3">
    <source>
        <dbReference type="UniProtKB" id="P0DJW8"/>
    </source>
</evidence>
<evidence type="ECO:0000250" key="4">
    <source>
        <dbReference type="UniProtKB" id="P0DXO5"/>
    </source>
</evidence>
<evidence type="ECO:0000305" key="5"/>
<proteinExistence type="inferred from homology"/>
<organismHost>
    <name type="scientific">Aves</name>
    <dbReference type="NCBI Taxonomy" id="8782"/>
</organismHost>
<organismHost>
    <name type="scientific">Sus scrofa</name>
    <name type="common">Pig</name>
    <dbReference type="NCBI Taxonomy" id="9823"/>
</organismHost>
<protein>
    <recommendedName>
        <fullName>Protein PA-X</fullName>
    </recommendedName>
</protein>
<name>PAX_I56A1</name>
<feature type="chain" id="PRO_0000419363" description="Protein PA-X">
    <location>
        <begin position="1"/>
        <end position="252"/>
    </location>
</feature>
<feature type="active site" evidence="2">
    <location>
        <position position="80"/>
    </location>
</feature>
<feature type="active site" evidence="2">
    <location>
        <position position="108"/>
    </location>
</feature>
<feature type="site" description="Important for efficient shutoff activity and nuclear localization" evidence="4">
    <location>
        <position position="195"/>
    </location>
</feature>
<feature type="site" description="Important for efficient shutoff activity and nuclear localization" evidence="4">
    <location>
        <position position="198"/>
    </location>
</feature>
<feature type="site" description="Important for efficient shutoff activity and nuclear localization" evidence="4">
    <location>
        <position position="199"/>
    </location>
</feature>
<feature type="site" description="Important for efficient shutoff activity" evidence="3">
    <location>
        <position position="202"/>
    </location>
</feature>
<feature type="site" description="Important for efficient shutoff activity" evidence="3">
    <location>
        <position position="203"/>
    </location>
</feature>
<feature type="site" description="Important for efficient shutoff activity" evidence="3">
    <location>
        <position position="206"/>
    </location>
</feature>
<reference key="1">
    <citation type="journal article" date="2006" name="Science">
        <title>Large-scale sequence analysis of avian influenza isolates.</title>
        <authorList>
            <person name="Obenauer J.C."/>
            <person name="Denson J."/>
            <person name="Mehta P.K."/>
            <person name="Su X."/>
            <person name="Mukatira S."/>
            <person name="Finkelstein D.B."/>
            <person name="Xu X."/>
            <person name="Wang J."/>
            <person name="Ma J."/>
            <person name="Fan Y."/>
            <person name="Rakestraw K.M."/>
            <person name="Webster R.G."/>
            <person name="Hoffmann E."/>
            <person name="Krauss S."/>
            <person name="Zheng J."/>
            <person name="Zhang Z."/>
            <person name="Naeve C.W."/>
        </authorList>
    </citation>
    <scope>NUCLEOTIDE SEQUENCE [GENOMIC RNA]</scope>
</reference>
<sequence>MEDFVRQCFNPMIIELAEKAMKEYGEDPKIETNKFAAICTHLEVCFMYSDFHFIDERGESIIVESGDPNALLKHRFEIIEGRDRTMAWTVVNSICNTTGVEKPKFLPDLYDYKENRFIEIGVTRREVHIYYLEKANKIKSEKTHIHIFSFTGEEMATKADYTLDEESRARVKTRLFTIRQEMASRGLWDSFVSPREAKRQLKKDLKSEEPCVGLPTKVSHRTSPALKTLEPMWMDSNRTAALRASFLKCPKK</sequence>
<organism>
    <name type="scientific">Influenza A virus (strain A/Duck/Czechoslovakia/1956 H4N6)</name>
    <dbReference type="NCBI Taxonomy" id="385590"/>
    <lineage>
        <taxon>Viruses</taxon>
        <taxon>Riboviria</taxon>
        <taxon>Orthornavirae</taxon>
        <taxon>Negarnaviricota</taxon>
        <taxon>Polyploviricotina</taxon>
        <taxon>Insthoviricetes</taxon>
        <taxon>Articulavirales</taxon>
        <taxon>Orthomyxoviridae</taxon>
        <taxon>Alphainfluenzavirus</taxon>
        <taxon>Alphainfluenzavirus influenzae</taxon>
        <taxon>Influenza A virus</taxon>
    </lineage>
</organism>
<accession>P0CK80</accession>
<gene>
    <name type="primary">PA</name>
</gene>
<keyword id="KW-1132">Decay of host mRNAs by virus</keyword>
<keyword id="KW-1262">Eukaryotic host gene expression shutoff by virus</keyword>
<keyword id="KW-1035">Host cytoplasm</keyword>
<keyword id="KW-1190">Host gene expression shutoff by virus</keyword>
<keyword id="KW-1192">Host mRNA suppression by virus</keyword>
<keyword id="KW-1048">Host nucleus</keyword>
<keyword id="KW-0945">Host-virus interaction</keyword>
<keyword id="KW-0688">Ribosomal frameshifting</keyword>
<comment type="function">
    <text evidence="1 4">Plays a major role in the shutoff of the host protein expression by cleaving mRNAs probably via an endonuclease activity. This host shutoff allows the virus to escape from the host antiviral response (By similarity). Hijacks host RNA splicing machinery to selectively target host RNAs containing introns for destruction. This may explain the preferential degradation of RNAs that have undergone co- or post-transcriptional processing (By similarity).</text>
</comment>
<comment type="subcellular location">
    <subcellularLocation>
        <location evidence="4">Host cytoplasm</location>
    </subcellularLocation>
    <subcellularLocation>
        <location evidence="4">Host nucleus</location>
    </subcellularLocation>
</comment>
<comment type="alternative products">
    <event type="ribosomal frameshifting"/>
    <isoform>
        <id>P0CK80-1</id>
        <name>PA-X</name>
        <sequence type="displayed"/>
    </isoform>
    <isoform>
        <id>Q20P15-1</id>
        <name>PA</name>
        <sequence type="external"/>
    </isoform>
</comment>
<comment type="domain">
    <text evidence="1 4">The probable endonuclease active site in the N-terminus and the basic amino acid cluster in the C-terminus are important for the shutoff activity. The C-terminus acts as a nuclear localization signal (By similarity). The C-terminus is recruited to host protein complexes involved in nuclear Pol II RNA processing (By similarity).</text>
</comment>
<comment type="similarity">
    <text evidence="5">Belongs to the influenza viruses PA-X family.</text>
</comment>